<comment type="function">
    <text evidence="1">Component of the cytochrome c oxidase, the last enzyme in the mitochondrial electron transport chain which drives oxidative phosphorylation. The respiratory chain contains 3 multisubunit complexes succinate dehydrogenase (complex II, CII), ubiquinol-cytochrome c oxidoreductase (cytochrome b-c1 complex, complex III, CIII) and cytochrome c oxidase (complex IV, CIV), that cooperate to transfer electrons derived from NADH and succinate to molecular oxygen, creating an electrochemical gradient over the inner membrane that drives transmembrane transport and the ATP synthase. Cytochrome c oxidase is the component of the respiratory chain that catalyzes the reduction of oxygen to water. Electrons originating from reduced cytochrome c in the intermembrane space (IMS) are transferred via the dinuclear copper A center (CU(A)) of subunit 2 and heme A of subunit 1 to the active site in subunit 1, a binuclear center (BNC) formed by heme A3 and copper B (CU(B)). The BNC reduces molecular oxygen to 2 water molecules using 4 electrons from cytochrome c in the IMS and 4 protons from the mitochondrial matrix.</text>
</comment>
<comment type="catalytic activity">
    <reaction evidence="1">
        <text>4 Fe(II)-[cytochrome c] + O2 + 8 H(+)(in) = 4 Fe(III)-[cytochrome c] + 2 H2O + 4 H(+)(out)</text>
        <dbReference type="Rhea" id="RHEA:11436"/>
        <dbReference type="Rhea" id="RHEA-COMP:10350"/>
        <dbReference type="Rhea" id="RHEA-COMP:14399"/>
        <dbReference type="ChEBI" id="CHEBI:15377"/>
        <dbReference type="ChEBI" id="CHEBI:15378"/>
        <dbReference type="ChEBI" id="CHEBI:15379"/>
        <dbReference type="ChEBI" id="CHEBI:29033"/>
        <dbReference type="ChEBI" id="CHEBI:29034"/>
        <dbReference type="EC" id="7.1.1.9"/>
    </reaction>
    <physiologicalReaction direction="left-to-right" evidence="1">
        <dbReference type="Rhea" id="RHEA:11437"/>
    </physiologicalReaction>
</comment>
<comment type="cofactor">
    <cofactor evidence="1">
        <name>Cu cation</name>
        <dbReference type="ChEBI" id="CHEBI:23378"/>
    </cofactor>
    <text evidence="1">Binds a dinuclear copper A center per subunit.</text>
</comment>
<comment type="subunit">
    <text evidence="1">Component of the cytochrome c oxidase (complex IV, CIV), a multisubunit enzyme composed of a catalytic core of 3 subunits and several supernumerary subunits. The complex exists as a monomer or a dimer and forms supercomplexes (SCs) in the inner mitochondrial membrane with ubiquinol-cytochrome c oxidoreductase (cytochrome b-c1 complex, complex III, CIII).</text>
</comment>
<comment type="subcellular location">
    <subcellularLocation>
        <location evidence="1">Mitochondrion inner membrane</location>
        <topology evidence="1">Multi-pass membrane protein</topology>
    </subcellularLocation>
</comment>
<comment type="similarity">
    <text evidence="3">Belongs to the cytochrome c oxidase subunit 2 family.</text>
</comment>
<accession>Q37545</accession>
<sequence>MPNWGQVMFQDAASSVMLQLVSFHDHALLVLTLVLTVVGYALLALMLNKQVNRYIMEAQTVETIWTILPALILLVLALPSLRILYITDEVSQPSITVKTIGHQWYWSYEYTDFLNVEMDSYMLPTSDLLPGDYRLLEVDNRMVVPMQLEIRMLITAADVIHSWTVPALGVKVDAVPGRLNQIGFTTTQPGVFYGQCSEICGANHSFMPIAVEAINTKSFMSWVSNFKP</sequence>
<protein>
    <recommendedName>
        <fullName>Cytochrome c oxidase subunit 2</fullName>
        <ecNumber>7.1.1.9</ecNumber>
    </recommendedName>
    <alternativeName>
        <fullName>Cytochrome c oxidase polypeptide II</fullName>
    </alternativeName>
</protein>
<keyword id="KW-0186">Copper</keyword>
<keyword id="KW-0249">Electron transport</keyword>
<keyword id="KW-0460">Magnesium</keyword>
<keyword id="KW-0472">Membrane</keyword>
<keyword id="KW-0479">Metal-binding</keyword>
<keyword id="KW-0496">Mitochondrion</keyword>
<keyword id="KW-0999">Mitochondrion inner membrane</keyword>
<keyword id="KW-0679">Respiratory chain</keyword>
<keyword id="KW-1278">Translocase</keyword>
<keyword id="KW-0812">Transmembrane</keyword>
<keyword id="KW-1133">Transmembrane helix</keyword>
<keyword id="KW-0813">Transport</keyword>
<dbReference type="EC" id="7.1.1.9"/>
<dbReference type="EMBL" id="U24570">
    <property type="protein sequence ID" value="AAC46865.1"/>
    <property type="molecule type" value="Genomic_DNA"/>
</dbReference>
<dbReference type="PIR" id="S58986">
    <property type="entry name" value="S58986"/>
</dbReference>
<dbReference type="RefSeq" id="NP_008239.1">
    <property type="nucleotide sequence ID" value="NC_001673.1"/>
</dbReference>
<dbReference type="SMR" id="Q37545"/>
<dbReference type="GeneID" id="807921"/>
<dbReference type="CTD" id="4513"/>
<dbReference type="GO" id="GO:0005743">
    <property type="term" value="C:mitochondrial inner membrane"/>
    <property type="evidence" value="ECO:0007669"/>
    <property type="project" value="UniProtKB-SubCell"/>
</dbReference>
<dbReference type="GO" id="GO:0005507">
    <property type="term" value="F:copper ion binding"/>
    <property type="evidence" value="ECO:0007669"/>
    <property type="project" value="InterPro"/>
</dbReference>
<dbReference type="GO" id="GO:0004129">
    <property type="term" value="F:cytochrome-c oxidase activity"/>
    <property type="evidence" value="ECO:0007669"/>
    <property type="project" value="UniProtKB-EC"/>
</dbReference>
<dbReference type="GO" id="GO:0042773">
    <property type="term" value="P:ATP synthesis coupled electron transport"/>
    <property type="evidence" value="ECO:0007669"/>
    <property type="project" value="TreeGrafter"/>
</dbReference>
<dbReference type="CDD" id="cd13912">
    <property type="entry name" value="CcO_II_C"/>
    <property type="match status" value="1"/>
</dbReference>
<dbReference type="FunFam" id="2.60.40.420:FF:000001">
    <property type="entry name" value="Cytochrome c oxidase subunit 2"/>
    <property type="match status" value="1"/>
</dbReference>
<dbReference type="Gene3D" id="1.10.287.90">
    <property type="match status" value="1"/>
</dbReference>
<dbReference type="Gene3D" id="2.60.40.420">
    <property type="entry name" value="Cupredoxins - blue copper proteins"/>
    <property type="match status" value="1"/>
</dbReference>
<dbReference type="InterPro" id="IPR045187">
    <property type="entry name" value="CcO_II"/>
</dbReference>
<dbReference type="InterPro" id="IPR002429">
    <property type="entry name" value="CcO_II-like_C"/>
</dbReference>
<dbReference type="InterPro" id="IPR034210">
    <property type="entry name" value="CcO_II_C"/>
</dbReference>
<dbReference type="InterPro" id="IPR001505">
    <property type="entry name" value="Copper_CuA"/>
</dbReference>
<dbReference type="InterPro" id="IPR008972">
    <property type="entry name" value="Cupredoxin"/>
</dbReference>
<dbReference type="InterPro" id="IPR014222">
    <property type="entry name" value="Cyt_c_oxidase_su2"/>
</dbReference>
<dbReference type="InterPro" id="IPR011759">
    <property type="entry name" value="Cyt_c_oxidase_su2_TM_dom"/>
</dbReference>
<dbReference type="InterPro" id="IPR036257">
    <property type="entry name" value="Cyt_c_oxidase_su2_TM_sf"/>
</dbReference>
<dbReference type="NCBIfam" id="TIGR02866">
    <property type="entry name" value="CoxB"/>
    <property type="match status" value="1"/>
</dbReference>
<dbReference type="PANTHER" id="PTHR22888:SF9">
    <property type="entry name" value="CYTOCHROME C OXIDASE SUBUNIT 2"/>
    <property type="match status" value="1"/>
</dbReference>
<dbReference type="PANTHER" id="PTHR22888">
    <property type="entry name" value="CYTOCHROME C OXIDASE, SUBUNIT II"/>
    <property type="match status" value="1"/>
</dbReference>
<dbReference type="Pfam" id="PF00116">
    <property type="entry name" value="COX2"/>
    <property type="match status" value="1"/>
</dbReference>
<dbReference type="Pfam" id="PF02790">
    <property type="entry name" value="COX2_TM"/>
    <property type="match status" value="1"/>
</dbReference>
<dbReference type="PRINTS" id="PR01166">
    <property type="entry name" value="CYCOXIDASEII"/>
</dbReference>
<dbReference type="SUPFAM" id="SSF49503">
    <property type="entry name" value="Cupredoxins"/>
    <property type="match status" value="1"/>
</dbReference>
<dbReference type="SUPFAM" id="SSF81464">
    <property type="entry name" value="Cytochrome c oxidase subunit II-like, transmembrane region"/>
    <property type="match status" value="1"/>
</dbReference>
<dbReference type="PROSITE" id="PS00078">
    <property type="entry name" value="COX2"/>
    <property type="match status" value="1"/>
</dbReference>
<dbReference type="PROSITE" id="PS50857">
    <property type="entry name" value="COX2_CUA"/>
    <property type="match status" value="1"/>
</dbReference>
<dbReference type="PROSITE" id="PS50999">
    <property type="entry name" value="COX2_TM"/>
    <property type="match status" value="1"/>
</dbReference>
<feature type="chain" id="PRO_0000183623" description="Cytochrome c oxidase subunit 2">
    <location>
        <begin position="1"/>
        <end position="228"/>
    </location>
</feature>
<feature type="topological domain" description="Mitochondrial intermembrane" evidence="2">
    <location>
        <begin position="1"/>
        <end position="26"/>
    </location>
</feature>
<feature type="transmembrane region" description="Helical" evidence="2">
    <location>
        <begin position="27"/>
        <end position="47"/>
    </location>
</feature>
<feature type="topological domain" description="Mitochondrial matrix" evidence="2">
    <location>
        <begin position="48"/>
        <end position="60"/>
    </location>
</feature>
<feature type="transmembrane region" description="Helical" evidence="2">
    <location>
        <begin position="61"/>
        <end position="81"/>
    </location>
</feature>
<feature type="topological domain" description="Mitochondrial intermembrane" evidence="2">
    <location>
        <begin position="82"/>
        <end position="228"/>
    </location>
</feature>
<feature type="binding site" evidence="1">
    <location>
        <position position="161"/>
    </location>
    <ligand>
        <name>Cu cation</name>
        <dbReference type="ChEBI" id="CHEBI:23378"/>
        <label>A1</label>
    </ligand>
</feature>
<feature type="binding site" evidence="1">
    <location>
        <position position="196"/>
    </location>
    <ligand>
        <name>Cu cation</name>
        <dbReference type="ChEBI" id="CHEBI:23378"/>
        <label>A1</label>
    </ligand>
</feature>
<feature type="binding site" evidence="1">
    <location>
        <position position="196"/>
    </location>
    <ligand>
        <name>Cu cation</name>
        <dbReference type="ChEBI" id="CHEBI:23378"/>
        <label>A2</label>
    </ligand>
</feature>
<feature type="binding site" evidence="1">
    <location>
        <position position="198"/>
    </location>
    <ligand>
        <name>Cu cation</name>
        <dbReference type="ChEBI" id="CHEBI:23378"/>
        <label>A2</label>
    </ligand>
</feature>
<feature type="binding site" evidence="1">
    <location>
        <position position="198"/>
    </location>
    <ligand>
        <name>Mg(2+)</name>
        <dbReference type="ChEBI" id="CHEBI:18420"/>
        <note>ligand shared with subunit 1</note>
    </ligand>
</feature>
<feature type="binding site" evidence="1">
    <location>
        <position position="200"/>
    </location>
    <ligand>
        <name>Cu cation</name>
        <dbReference type="ChEBI" id="CHEBI:23378"/>
        <label>A1</label>
    </ligand>
</feature>
<feature type="binding site" evidence="1">
    <location>
        <position position="200"/>
    </location>
    <ligand>
        <name>Cu cation</name>
        <dbReference type="ChEBI" id="CHEBI:23378"/>
        <label>A2</label>
    </ligand>
</feature>
<feature type="binding site" evidence="1">
    <location>
        <position position="204"/>
    </location>
    <ligand>
        <name>Cu cation</name>
        <dbReference type="ChEBI" id="CHEBI:23378"/>
        <label>A2</label>
    </ligand>
</feature>
<feature type="binding site" evidence="1">
    <location>
        <position position="207"/>
    </location>
    <ligand>
        <name>Cu cation</name>
        <dbReference type="ChEBI" id="CHEBI:23378"/>
        <label>A1</label>
    </ligand>
</feature>
<organism>
    <name type="scientific">Lumbricus terrestris</name>
    <name type="common">Common earthworm</name>
    <dbReference type="NCBI Taxonomy" id="6398"/>
    <lineage>
        <taxon>Eukaryota</taxon>
        <taxon>Metazoa</taxon>
        <taxon>Spiralia</taxon>
        <taxon>Lophotrochozoa</taxon>
        <taxon>Annelida</taxon>
        <taxon>Clitellata</taxon>
        <taxon>Oligochaeta</taxon>
        <taxon>Crassiclitellata</taxon>
        <taxon>Lumbricina</taxon>
        <taxon>Lumbricidae</taxon>
        <taxon>Lumbricinae</taxon>
        <taxon>Lumbricus</taxon>
    </lineage>
</organism>
<gene>
    <name type="primary">COII</name>
</gene>
<proteinExistence type="inferred from homology"/>
<name>COX2_LUMTE</name>
<evidence type="ECO:0000250" key="1">
    <source>
        <dbReference type="UniProtKB" id="P00410"/>
    </source>
</evidence>
<evidence type="ECO:0000255" key="2"/>
<evidence type="ECO:0000305" key="3"/>
<reference key="1">
    <citation type="journal article" date="1995" name="Genetics">
        <title>Complete sequence of the mitochondrial DNA of the annelid worm Lumbricus terrestris.</title>
        <authorList>
            <person name="Boore J.L."/>
            <person name="Brown W.M."/>
        </authorList>
    </citation>
    <scope>NUCLEOTIDE SEQUENCE [GENOMIC DNA]</scope>
</reference>
<geneLocation type="mitochondrion"/>